<evidence type="ECO:0000255" key="1">
    <source>
        <dbReference type="HAMAP-Rule" id="MF_01864"/>
    </source>
</evidence>
<evidence type="ECO:0000255" key="2">
    <source>
        <dbReference type="PROSITE-ProRule" id="PRU01266"/>
    </source>
</evidence>
<evidence type="ECO:0000256" key="3">
    <source>
        <dbReference type="SAM" id="MobiDB-lite"/>
    </source>
</evidence>
<evidence type="ECO:0000305" key="4"/>
<comment type="function">
    <text evidence="1">Catalyzes the methylthiolation of N6-(dimethylallyl)adenosine (i(6)A), leading to the formation of 2-methylthio-N6-(dimethylallyl)adenosine (ms(2)i(6)A) at position 37 in tRNAs that read codons beginning with uridine.</text>
</comment>
<comment type="catalytic activity">
    <reaction evidence="1">
        <text>N(6)-dimethylallyladenosine(37) in tRNA + (sulfur carrier)-SH + AH2 + 2 S-adenosyl-L-methionine = 2-methylsulfanyl-N(6)-dimethylallyladenosine(37) in tRNA + (sulfur carrier)-H + 5'-deoxyadenosine + L-methionine + A + S-adenosyl-L-homocysteine + 2 H(+)</text>
        <dbReference type="Rhea" id="RHEA:37067"/>
        <dbReference type="Rhea" id="RHEA-COMP:10375"/>
        <dbReference type="Rhea" id="RHEA-COMP:10376"/>
        <dbReference type="Rhea" id="RHEA-COMP:14737"/>
        <dbReference type="Rhea" id="RHEA-COMP:14739"/>
        <dbReference type="ChEBI" id="CHEBI:13193"/>
        <dbReference type="ChEBI" id="CHEBI:15378"/>
        <dbReference type="ChEBI" id="CHEBI:17319"/>
        <dbReference type="ChEBI" id="CHEBI:17499"/>
        <dbReference type="ChEBI" id="CHEBI:29917"/>
        <dbReference type="ChEBI" id="CHEBI:57844"/>
        <dbReference type="ChEBI" id="CHEBI:57856"/>
        <dbReference type="ChEBI" id="CHEBI:59789"/>
        <dbReference type="ChEBI" id="CHEBI:64428"/>
        <dbReference type="ChEBI" id="CHEBI:74415"/>
        <dbReference type="ChEBI" id="CHEBI:74417"/>
        <dbReference type="EC" id="2.8.4.3"/>
    </reaction>
</comment>
<comment type="cofactor">
    <cofactor evidence="1">
        <name>[4Fe-4S] cluster</name>
        <dbReference type="ChEBI" id="CHEBI:49883"/>
    </cofactor>
    <text evidence="1">Binds 2 [4Fe-4S] clusters. One cluster is coordinated with 3 cysteines and an exchangeable S-adenosyl-L-methionine.</text>
</comment>
<comment type="subunit">
    <text evidence="1">Monomer.</text>
</comment>
<comment type="subcellular location">
    <subcellularLocation>
        <location evidence="1">Cytoplasm</location>
    </subcellularLocation>
</comment>
<comment type="similarity">
    <text evidence="1">Belongs to the methylthiotransferase family. MiaB subfamily.</text>
</comment>
<comment type="sequence caution" evidence="4">
    <conflict type="erroneous initiation">
        <sequence resource="EMBL-CDS" id="ACB74084"/>
    </conflict>
</comment>
<proteinExistence type="inferred from homology"/>
<name>MIAB_OPITP</name>
<keyword id="KW-0004">4Fe-4S</keyword>
<keyword id="KW-0963">Cytoplasm</keyword>
<keyword id="KW-0408">Iron</keyword>
<keyword id="KW-0411">Iron-sulfur</keyword>
<keyword id="KW-0479">Metal-binding</keyword>
<keyword id="KW-1185">Reference proteome</keyword>
<keyword id="KW-0949">S-adenosyl-L-methionine</keyword>
<keyword id="KW-0808">Transferase</keyword>
<keyword id="KW-0819">tRNA processing</keyword>
<dbReference type="EC" id="2.8.4.3" evidence="1"/>
<dbReference type="EMBL" id="CP001032">
    <property type="protein sequence ID" value="ACB74084.1"/>
    <property type="status" value="ALT_INIT"/>
    <property type="molecule type" value="Genomic_DNA"/>
</dbReference>
<dbReference type="RefSeq" id="WP_044891549.1">
    <property type="nucleotide sequence ID" value="NC_010571.1"/>
</dbReference>
<dbReference type="SMR" id="B1ZVI7"/>
<dbReference type="STRING" id="452637.Oter_0796"/>
<dbReference type="KEGG" id="ote:Oter_0796"/>
<dbReference type="eggNOG" id="COG0621">
    <property type="taxonomic scope" value="Bacteria"/>
</dbReference>
<dbReference type="HOGENOM" id="CLU_018697_2_0_0"/>
<dbReference type="OrthoDB" id="9805215at2"/>
<dbReference type="Proteomes" id="UP000007013">
    <property type="component" value="Chromosome"/>
</dbReference>
<dbReference type="GO" id="GO:0005829">
    <property type="term" value="C:cytosol"/>
    <property type="evidence" value="ECO:0007669"/>
    <property type="project" value="TreeGrafter"/>
</dbReference>
<dbReference type="GO" id="GO:0051539">
    <property type="term" value="F:4 iron, 4 sulfur cluster binding"/>
    <property type="evidence" value="ECO:0007669"/>
    <property type="project" value="UniProtKB-UniRule"/>
</dbReference>
<dbReference type="GO" id="GO:0046872">
    <property type="term" value="F:metal ion binding"/>
    <property type="evidence" value="ECO:0007669"/>
    <property type="project" value="UniProtKB-KW"/>
</dbReference>
<dbReference type="GO" id="GO:0035597">
    <property type="term" value="F:N6-isopentenyladenosine methylthiotransferase activity"/>
    <property type="evidence" value="ECO:0007669"/>
    <property type="project" value="TreeGrafter"/>
</dbReference>
<dbReference type="CDD" id="cd01335">
    <property type="entry name" value="Radical_SAM"/>
    <property type="match status" value="1"/>
</dbReference>
<dbReference type="FunFam" id="3.40.50.12160:FF:000003">
    <property type="entry name" value="CDK5 regulatory subunit-associated protein 1"/>
    <property type="match status" value="1"/>
</dbReference>
<dbReference type="FunFam" id="3.80.30.20:FF:000001">
    <property type="entry name" value="tRNA-2-methylthio-N(6)-dimethylallyladenosine synthase 2"/>
    <property type="match status" value="1"/>
</dbReference>
<dbReference type="Gene3D" id="3.40.50.12160">
    <property type="entry name" value="Methylthiotransferase, N-terminal domain"/>
    <property type="match status" value="1"/>
</dbReference>
<dbReference type="Gene3D" id="3.80.30.20">
    <property type="entry name" value="tm_1862 like domain"/>
    <property type="match status" value="1"/>
</dbReference>
<dbReference type="HAMAP" id="MF_01864">
    <property type="entry name" value="tRNA_metthiotr_MiaB"/>
    <property type="match status" value="1"/>
</dbReference>
<dbReference type="InterPro" id="IPR006638">
    <property type="entry name" value="Elp3/MiaA/NifB-like_rSAM"/>
</dbReference>
<dbReference type="InterPro" id="IPR005839">
    <property type="entry name" value="Methylthiotransferase"/>
</dbReference>
<dbReference type="InterPro" id="IPR020612">
    <property type="entry name" value="Methylthiotransferase_CS"/>
</dbReference>
<dbReference type="InterPro" id="IPR013848">
    <property type="entry name" value="Methylthiotransferase_N"/>
</dbReference>
<dbReference type="InterPro" id="IPR038135">
    <property type="entry name" value="Methylthiotransferase_N_sf"/>
</dbReference>
<dbReference type="InterPro" id="IPR006463">
    <property type="entry name" value="MiaB_methiolase"/>
</dbReference>
<dbReference type="InterPro" id="IPR007197">
    <property type="entry name" value="rSAM"/>
</dbReference>
<dbReference type="InterPro" id="IPR023404">
    <property type="entry name" value="rSAM_horseshoe"/>
</dbReference>
<dbReference type="InterPro" id="IPR002792">
    <property type="entry name" value="TRAM_dom"/>
</dbReference>
<dbReference type="NCBIfam" id="TIGR01574">
    <property type="entry name" value="miaB-methiolase"/>
    <property type="match status" value="1"/>
</dbReference>
<dbReference type="NCBIfam" id="TIGR00089">
    <property type="entry name" value="MiaB/RimO family radical SAM methylthiotransferase"/>
    <property type="match status" value="1"/>
</dbReference>
<dbReference type="PANTHER" id="PTHR43020">
    <property type="entry name" value="CDK5 REGULATORY SUBUNIT-ASSOCIATED PROTEIN 1"/>
    <property type="match status" value="1"/>
</dbReference>
<dbReference type="PANTHER" id="PTHR43020:SF2">
    <property type="entry name" value="MITOCHONDRIAL TRNA METHYLTHIOTRANSFERASE CDK5RAP1"/>
    <property type="match status" value="1"/>
</dbReference>
<dbReference type="Pfam" id="PF04055">
    <property type="entry name" value="Radical_SAM"/>
    <property type="match status" value="1"/>
</dbReference>
<dbReference type="Pfam" id="PF01938">
    <property type="entry name" value="TRAM"/>
    <property type="match status" value="1"/>
</dbReference>
<dbReference type="Pfam" id="PF00919">
    <property type="entry name" value="UPF0004"/>
    <property type="match status" value="1"/>
</dbReference>
<dbReference type="SFLD" id="SFLDF00273">
    <property type="entry name" value="(dimethylallyl)adenosine_tRNA"/>
    <property type="match status" value="1"/>
</dbReference>
<dbReference type="SFLD" id="SFLDG01082">
    <property type="entry name" value="B12-binding_domain_containing"/>
    <property type="match status" value="1"/>
</dbReference>
<dbReference type="SFLD" id="SFLDG01061">
    <property type="entry name" value="methylthiotransferase"/>
    <property type="match status" value="1"/>
</dbReference>
<dbReference type="SMART" id="SM00729">
    <property type="entry name" value="Elp3"/>
    <property type="match status" value="1"/>
</dbReference>
<dbReference type="SUPFAM" id="SSF102114">
    <property type="entry name" value="Radical SAM enzymes"/>
    <property type="match status" value="1"/>
</dbReference>
<dbReference type="PROSITE" id="PS51449">
    <property type="entry name" value="MTTASE_N"/>
    <property type="match status" value="1"/>
</dbReference>
<dbReference type="PROSITE" id="PS01278">
    <property type="entry name" value="MTTASE_RADICAL"/>
    <property type="match status" value="1"/>
</dbReference>
<dbReference type="PROSITE" id="PS51918">
    <property type="entry name" value="RADICAL_SAM"/>
    <property type="match status" value="1"/>
</dbReference>
<dbReference type="PROSITE" id="PS50926">
    <property type="entry name" value="TRAM"/>
    <property type="match status" value="1"/>
</dbReference>
<feature type="chain" id="PRO_0000374421" description="tRNA-2-methylthio-N(6)-dimethylallyladenosine synthase">
    <location>
        <begin position="1"/>
        <end position="480"/>
    </location>
</feature>
<feature type="domain" description="MTTase N-terminal" evidence="1">
    <location>
        <begin position="2"/>
        <end position="118"/>
    </location>
</feature>
<feature type="domain" description="Radical SAM core" evidence="2">
    <location>
        <begin position="171"/>
        <end position="405"/>
    </location>
</feature>
<feature type="domain" description="TRAM" evidence="1">
    <location>
        <begin position="408"/>
        <end position="470"/>
    </location>
</feature>
<feature type="region of interest" description="Disordered" evidence="3">
    <location>
        <begin position="145"/>
        <end position="169"/>
    </location>
</feature>
<feature type="compositionally biased region" description="Low complexity" evidence="3">
    <location>
        <begin position="149"/>
        <end position="159"/>
    </location>
</feature>
<feature type="binding site" evidence="1">
    <location>
        <position position="11"/>
    </location>
    <ligand>
        <name>[4Fe-4S] cluster</name>
        <dbReference type="ChEBI" id="CHEBI:49883"/>
        <label>1</label>
    </ligand>
</feature>
<feature type="binding site" evidence="1">
    <location>
        <position position="47"/>
    </location>
    <ligand>
        <name>[4Fe-4S] cluster</name>
        <dbReference type="ChEBI" id="CHEBI:49883"/>
        <label>1</label>
    </ligand>
</feature>
<feature type="binding site" evidence="1">
    <location>
        <position position="81"/>
    </location>
    <ligand>
        <name>[4Fe-4S] cluster</name>
        <dbReference type="ChEBI" id="CHEBI:49883"/>
        <label>1</label>
    </ligand>
</feature>
<feature type="binding site" evidence="1">
    <location>
        <position position="185"/>
    </location>
    <ligand>
        <name>[4Fe-4S] cluster</name>
        <dbReference type="ChEBI" id="CHEBI:49883"/>
        <label>2</label>
        <note>4Fe-4S-S-AdoMet</note>
    </ligand>
</feature>
<feature type="binding site" evidence="1">
    <location>
        <position position="189"/>
    </location>
    <ligand>
        <name>[4Fe-4S] cluster</name>
        <dbReference type="ChEBI" id="CHEBI:49883"/>
        <label>2</label>
        <note>4Fe-4S-S-AdoMet</note>
    </ligand>
</feature>
<feature type="binding site" evidence="1">
    <location>
        <position position="192"/>
    </location>
    <ligand>
        <name>[4Fe-4S] cluster</name>
        <dbReference type="ChEBI" id="CHEBI:49883"/>
        <label>2</label>
        <note>4Fe-4S-S-AdoMet</note>
    </ligand>
</feature>
<organism>
    <name type="scientific">Opitutus terrae (strain DSM 11246 / JCM 15787 / PB90-1)</name>
    <dbReference type="NCBI Taxonomy" id="452637"/>
    <lineage>
        <taxon>Bacteria</taxon>
        <taxon>Pseudomonadati</taxon>
        <taxon>Verrucomicrobiota</taxon>
        <taxon>Opitutia</taxon>
        <taxon>Opitutales</taxon>
        <taxon>Opitutaceae</taxon>
        <taxon>Opitutus</taxon>
    </lineage>
</organism>
<accession>B1ZVI7</accession>
<protein>
    <recommendedName>
        <fullName evidence="1">tRNA-2-methylthio-N(6)-dimethylallyladenosine synthase</fullName>
        <ecNumber evidence="1">2.8.4.3</ecNumber>
    </recommendedName>
    <alternativeName>
        <fullName evidence="1">(Dimethylallyl)adenosine tRNA methylthiotransferase MiaB</fullName>
    </alternativeName>
    <alternativeName>
        <fullName evidence="1">tRNA-i(6)A37 methylthiotransferase</fullName>
    </alternativeName>
</protein>
<reference key="1">
    <citation type="journal article" date="2011" name="J. Bacteriol.">
        <title>Genome sequence of the verrucomicrobium Opitutus terrae PB90-1, an abundant inhabitant of rice paddy soil ecosystems.</title>
        <authorList>
            <person name="van Passel M.W."/>
            <person name="Kant R."/>
            <person name="Palva A."/>
            <person name="Copeland A."/>
            <person name="Lucas S."/>
            <person name="Lapidus A."/>
            <person name="Glavina del Rio T."/>
            <person name="Pitluck S."/>
            <person name="Goltsman E."/>
            <person name="Clum A."/>
            <person name="Sun H."/>
            <person name="Schmutz J."/>
            <person name="Larimer F.W."/>
            <person name="Land M.L."/>
            <person name="Hauser L."/>
            <person name="Kyrpides N."/>
            <person name="Mikhailova N."/>
            <person name="Richardson P.P."/>
            <person name="Janssen P.H."/>
            <person name="de Vos W.M."/>
            <person name="Smidt H."/>
        </authorList>
    </citation>
    <scope>NUCLEOTIDE SEQUENCE [LARGE SCALE GENOMIC DNA]</scope>
    <source>
        <strain>DSM 11246 / JCM 15787 / PB90-1</strain>
    </source>
</reference>
<sequence length="480" mass="53739">MNRVHIKTYGCQMNERDSEAVAAMLRARGYRIVADENDCDILLLNTCSVRDAAEQKAIGKAGYLQQRKKKQPDFVLGILGCMAQNRGASLLDQLPDVDLIVGTQKFHQVPGYLDNLRAARDAGVPIGETIVDIGEEAGSQNTIKDHLLPQDSDSDSQPSTLNSQLRGAAAPPPQITAFVSIQQGCNMDCAFCIVPKTRGDERSRPMDDIVRECEQLAARGVREVTLLGQIVTSYGRRDYTHTNGISPFVQLLERVHALDGIERIRFTSPHPRGFKDDLVAAYGRLPKLCGYVHLPLQSGSNRILRAMNRPYTRERYREIVDALRAVRSDMYFSTDVIVGFPGETDEDFEQTRELFEACNYDMAYVFKYSVRTGTPAAERGDQVPEDVKEQRNQLLLELLRQNSERRNALLLDTVEEVLVEGPDKTGQRFTGRTRGNRVCIFEATPDLVGRLVSLRITRASVSTLYGELMLAGVGRERNRK</sequence>
<gene>
    <name evidence="1" type="primary">miaB</name>
    <name type="ordered locus">Oter_0796</name>
</gene>